<comment type="function">
    <text evidence="1">DNA-dependent RNA polymerase (RNAP) catalyzes the transcription of DNA into RNA using the four ribonucleoside triphosphates as substrates.</text>
</comment>
<comment type="catalytic activity">
    <reaction evidence="1">
        <text>RNA(n) + a ribonucleoside 5'-triphosphate = RNA(n+1) + diphosphate</text>
        <dbReference type="Rhea" id="RHEA:21248"/>
        <dbReference type="Rhea" id="RHEA-COMP:14527"/>
        <dbReference type="Rhea" id="RHEA-COMP:17342"/>
        <dbReference type="ChEBI" id="CHEBI:33019"/>
        <dbReference type="ChEBI" id="CHEBI:61557"/>
        <dbReference type="ChEBI" id="CHEBI:140395"/>
        <dbReference type="EC" id="2.7.7.6"/>
    </reaction>
</comment>
<comment type="cofactor">
    <cofactor evidence="1">
        <name>Zn(2+)</name>
        <dbReference type="ChEBI" id="CHEBI:29105"/>
    </cofactor>
    <text evidence="1">Binds 1 zinc ion.</text>
</comment>
<comment type="subunit">
    <text evidence="1">Part of the RNA polymerase complex.</text>
</comment>
<comment type="subcellular location">
    <subcellularLocation>
        <location evidence="1">Cytoplasm</location>
    </subcellularLocation>
</comment>
<comment type="similarity">
    <text evidence="1">Belongs to the archaeal Rpo10/eukaryotic RPB10 RNA polymerase subunit family.</text>
</comment>
<proteinExistence type="inferred from homology"/>
<keyword id="KW-0963">Cytoplasm</keyword>
<keyword id="KW-0240">DNA-directed RNA polymerase</keyword>
<keyword id="KW-0479">Metal-binding</keyword>
<keyword id="KW-0548">Nucleotidyltransferase</keyword>
<keyword id="KW-1185">Reference proteome</keyword>
<keyword id="KW-0804">Transcription</keyword>
<keyword id="KW-0808">Transferase</keyword>
<keyword id="KW-0862">Zinc</keyword>
<name>RPO10_CALMQ</name>
<gene>
    <name evidence="1" type="primary">rpo10</name>
    <name evidence="1" type="synonym">rpoN</name>
    <name type="ordered locus">Cmaq_1572</name>
</gene>
<reference key="1">
    <citation type="submission" date="2007-10" db="EMBL/GenBank/DDBJ databases">
        <title>Complete sequence of Caldivirga maquilingensis IC-167.</title>
        <authorList>
            <consortium name="US DOE Joint Genome Institute"/>
            <person name="Copeland A."/>
            <person name="Lucas S."/>
            <person name="Lapidus A."/>
            <person name="Barry K."/>
            <person name="Glavina del Rio T."/>
            <person name="Dalin E."/>
            <person name="Tice H."/>
            <person name="Pitluck S."/>
            <person name="Saunders E."/>
            <person name="Brettin T."/>
            <person name="Bruce D."/>
            <person name="Detter J.C."/>
            <person name="Han C."/>
            <person name="Schmutz J."/>
            <person name="Larimer F."/>
            <person name="Land M."/>
            <person name="Hauser L."/>
            <person name="Kyrpides N."/>
            <person name="Ivanova N."/>
            <person name="Biddle J.F."/>
            <person name="Zhang Z."/>
            <person name="Fitz-Gibbon S.T."/>
            <person name="Lowe T.M."/>
            <person name="Saltikov C."/>
            <person name="House C.H."/>
            <person name="Richardson P."/>
        </authorList>
    </citation>
    <scope>NUCLEOTIDE SEQUENCE [LARGE SCALE GENOMIC DNA]</scope>
    <source>
        <strain>ATCC 700844 / DSM 13496 / JCM 10307 / IC-167</strain>
    </source>
</reference>
<evidence type="ECO:0000255" key="1">
    <source>
        <dbReference type="HAMAP-Rule" id="MF_00250"/>
    </source>
</evidence>
<feature type="chain" id="PRO_1000078461" description="DNA-directed RNA polymerase subunit Rpo10">
    <location>
        <begin position="1"/>
        <end position="67"/>
    </location>
</feature>
<feature type="binding site" evidence="1">
    <location>
        <position position="7"/>
    </location>
    <ligand>
        <name>Zn(2+)</name>
        <dbReference type="ChEBI" id="CHEBI:29105"/>
    </ligand>
</feature>
<feature type="binding site" evidence="1">
    <location>
        <position position="10"/>
    </location>
    <ligand>
        <name>Zn(2+)</name>
        <dbReference type="ChEBI" id="CHEBI:29105"/>
    </ligand>
</feature>
<feature type="binding site" evidence="1">
    <location>
        <position position="44"/>
    </location>
    <ligand>
        <name>Zn(2+)</name>
        <dbReference type="ChEBI" id="CHEBI:29105"/>
    </ligand>
</feature>
<feature type="binding site" evidence="1">
    <location>
        <position position="45"/>
    </location>
    <ligand>
        <name>Zn(2+)</name>
        <dbReference type="ChEBI" id="CHEBI:29105"/>
    </ligand>
</feature>
<accession>A8M9S4</accession>
<sequence>MIVPIRCWTCGRPLGHLWEPFRNRVLAGEDPGKVLDDLHVTRYCCRRTLLAHVELINQVLPYGLIEK</sequence>
<organism>
    <name type="scientific">Caldivirga maquilingensis (strain ATCC 700844 / DSM 13496 / JCM 10307 / IC-167)</name>
    <dbReference type="NCBI Taxonomy" id="397948"/>
    <lineage>
        <taxon>Archaea</taxon>
        <taxon>Thermoproteota</taxon>
        <taxon>Thermoprotei</taxon>
        <taxon>Thermoproteales</taxon>
        <taxon>Thermoproteaceae</taxon>
        <taxon>Caldivirga</taxon>
    </lineage>
</organism>
<dbReference type="EC" id="2.7.7.6" evidence="1"/>
<dbReference type="EMBL" id="CP000852">
    <property type="protein sequence ID" value="ABW02395.1"/>
    <property type="molecule type" value="Genomic_DNA"/>
</dbReference>
<dbReference type="RefSeq" id="WP_012186614.1">
    <property type="nucleotide sequence ID" value="NC_009954.1"/>
</dbReference>
<dbReference type="SMR" id="A8M9S4"/>
<dbReference type="STRING" id="397948.Cmaq_1572"/>
<dbReference type="GeneID" id="5709226"/>
<dbReference type="KEGG" id="cma:Cmaq_1572"/>
<dbReference type="eggNOG" id="arCOG04244">
    <property type="taxonomic scope" value="Archaea"/>
</dbReference>
<dbReference type="HOGENOM" id="CLU_143122_1_1_2"/>
<dbReference type="OrthoDB" id="371754at2157"/>
<dbReference type="Proteomes" id="UP000001137">
    <property type="component" value="Chromosome"/>
</dbReference>
<dbReference type="GO" id="GO:0005737">
    <property type="term" value="C:cytoplasm"/>
    <property type="evidence" value="ECO:0007669"/>
    <property type="project" value="UniProtKB-SubCell"/>
</dbReference>
<dbReference type="GO" id="GO:0000428">
    <property type="term" value="C:DNA-directed RNA polymerase complex"/>
    <property type="evidence" value="ECO:0007669"/>
    <property type="project" value="UniProtKB-KW"/>
</dbReference>
<dbReference type="GO" id="GO:0003677">
    <property type="term" value="F:DNA binding"/>
    <property type="evidence" value="ECO:0007669"/>
    <property type="project" value="InterPro"/>
</dbReference>
<dbReference type="GO" id="GO:0003899">
    <property type="term" value="F:DNA-directed RNA polymerase activity"/>
    <property type="evidence" value="ECO:0007669"/>
    <property type="project" value="UniProtKB-UniRule"/>
</dbReference>
<dbReference type="GO" id="GO:0008270">
    <property type="term" value="F:zinc ion binding"/>
    <property type="evidence" value="ECO:0007669"/>
    <property type="project" value="UniProtKB-UniRule"/>
</dbReference>
<dbReference type="GO" id="GO:0006351">
    <property type="term" value="P:DNA-templated transcription"/>
    <property type="evidence" value="ECO:0007669"/>
    <property type="project" value="UniProtKB-UniRule"/>
</dbReference>
<dbReference type="FunFam" id="1.10.10.60:FF:000024">
    <property type="entry name" value="DNA-directed RNA polymerases I, II, and III subunit"/>
    <property type="match status" value="1"/>
</dbReference>
<dbReference type="Gene3D" id="1.10.10.60">
    <property type="entry name" value="Homeodomain-like"/>
    <property type="match status" value="1"/>
</dbReference>
<dbReference type="HAMAP" id="MF_00250">
    <property type="entry name" value="RNApol_arch_Rpo10"/>
    <property type="match status" value="1"/>
</dbReference>
<dbReference type="InterPro" id="IPR023580">
    <property type="entry name" value="RNA_pol_su_RPB10"/>
</dbReference>
<dbReference type="InterPro" id="IPR000268">
    <property type="entry name" value="RPABC5/Rpb10"/>
</dbReference>
<dbReference type="NCBIfam" id="NF003089">
    <property type="entry name" value="PRK04016.1"/>
    <property type="match status" value="1"/>
</dbReference>
<dbReference type="PANTHER" id="PTHR23431:SF3">
    <property type="entry name" value="DNA-DIRECTED RNA POLYMERASES I, II, AND III SUBUNIT RPABC5"/>
    <property type="match status" value="1"/>
</dbReference>
<dbReference type="PANTHER" id="PTHR23431">
    <property type="entry name" value="DNA-DIRECTED RNA POLYMERASES I, II, AND III SUBUNIT RPABC5 FAMILY MEMBER"/>
    <property type="match status" value="1"/>
</dbReference>
<dbReference type="Pfam" id="PF01194">
    <property type="entry name" value="RNA_pol_N"/>
    <property type="match status" value="1"/>
</dbReference>
<dbReference type="PIRSF" id="PIRSF005653">
    <property type="entry name" value="RNA_pol_N/8_sub"/>
    <property type="match status" value="1"/>
</dbReference>
<dbReference type="SUPFAM" id="SSF46924">
    <property type="entry name" value="RNA polymerase subunit RPB10"/>
    <property type="match status" value="1"/>
</dbReference>
<protein>
    <recommendedName>
        <fullName evidence="1">DNA-directed RNA polymerase subunit Rpo10</fullName>
        <ecNumber evidence="1">2.7.7.6</ecNumber>
    </recommendedName>
    <alternativeName>
        <fullName evidence="1">DNA-directed RNA polymerase subunit N</fullName>
    </alternativeName>
</protein>